<organism>
    <name type="scientific">Fusarium oxysporum f. sp. lycopersici (strain 4287 / CBS 123668 / FGSC 9935 / NRRL 34936)</name>
    <name type="common">Fusarium vascular wilt of tomato</name>
    <dbReference type="NCBI Taxonomy" id="426428"/>
    <lineage>
        <taxon>Eukaryota</taxon>
        <taxon>Fungi</taxon>
        <taxon>Dikarya</taxon>
        <taxon>Ascomycota</taxon>
        <taxon>Pezizomycotina</taxon>
        <taxon>Sordariomycetes</taxon>
        <taxon>Hypocreomycetidae</taxon>
        <taxon>Hypocreales</taxon>
        <taxon>Nectriaceae</taxon>
        <taxon>Fusarium</taxon>
        <taxon>Fusarium oxysporum species complex</taxon>
    </lineage>
</organism>
<accession>J9N5P9</accession>
<sequence length="330" mass="37842">MSGTMPLQPTFYGFIGDTTDALIIFEACLSGKLFHVPRRPHDRERQDLIKSGNIFVYEEHASGIKRWTDSISWSPSRILGNYLLYRELEKPFPPGEKKRARGRNGKSTTQSGGITKSRPRNSVPFQTGLEHGNEYTTVPSDDERHLVGSLVDSYDFKEQGLVKKTISITYQGVPHHLVSYYHVEDVKAGLLPSPVDDPRLRGVVPRTELLTGQNFRAPIEEAQHGTYLSGAYMPNMDHQYAPIGFPTHTQQPALQQQPQQQPQPQHQPQLQYQPQPHQHQPQLQYQPQQQHQPQQQYRPQPQHQPQLQYQPQALHPTAHGYPQSYGQTWW</sequence>
<dbReference type="EMBL" id="AAXH01000631">
    <property type="status" value="NOT_ANNOTATED_CDS"/>
    <property type="molecule type" value="Genomic_DNA"/>
</dbReference>
<dbReference type="RefSeq" id="XP_018248224.1">
    <property type="nucleotide sequence ID" value="XM_018389881.1"/>
</dbReference>
<dbReference type="SMR" id="J9N5P9"/>
<dbReference type="STRING" id="426428.J9N5P9"/>
<dbReference type="EnsemblFungi" id="FOXG_10510T0">
    <property type="protein sequence ID" value="FOXG_10510P0"/>
    <property type="gene ID" value="FOXG_10510"/>
</dbReference>
<dbReference type="GeneID" id="28951982"/>
<dbReference type="KEGG" id="fox:FOXG_10510"/>
<dbReference type="VEuPathDB" id="FungiDB:FOXG_10510"/>
<dbReference type="HOGENOM" id="CLU_028895_3_0_1"/>
<dbReference type="OMA" id="IGFPTHT"/>
<dbReference type="PHI-base" id="PHI:3168"/>
<dbReference type="GO" id="GO:0005634">
    <property type="term" value="C:nucleus"/>
    <property type="evidence" value="ECO:0007669"/>
    <property type="project" value="UniProtKB-SubCell"/>
</dbReference>
<dbReference type="GO" id="GO:0003677">
    <property type="term" value="F:DNA binding"/>
    <property type="evidence" value="ECO:0007669"/>
    <property type="project" value="TreeGrafter"/>
</dbReference>
<dbReference type="InterPro" id="IPR018608">
    <property type="entry name" value="Gti1/Pac2"/>
</dbReference>
<dbReference type="PANTHER" id="PTHR28027">
    <property type="entry name" value="TRANSCRIPTIONAL REGULATOR MIT1"/>
    <property type="match status" value="1"/>
</dbReference>
<dbReference type="PANTHER" id="PTHR28027:SF2">
    <property type="entry name" value="TRANSCRIPTIONAL REGULATOR MIT1"/>
    <property type="match status" value="1"/>
</dbReference>
<dbReference type="Pfam" id="PF09729">
    <property type="entry name" value="Gti1_Pac2"/>
    <property type="match status" value="1"/>
</dbReference>
<reference key="1">
    <citation type="journal article" date="2010" name="Nature">
        <title>Comparative genomics reveals mobile pathogenicity chromosomes in Fusarium.</title>
        <authorList>
            <person name="Ma L.-J."/>
            <person name="van der Does H.C."/>
            <person name="Borkovich K.A."/>
            <person name="Coleman J.J."/>
            <person name="Daboussi M.-J."/>
            <person name="Di Pietro A."/>
            <person name="Dufresne M."/>
            <person name="Freitag M."/>
            <person name="Grabherr M."/>
            <person name="Henrissat B."/>
            <person name="Houterman P.M."/>
            <person name="Kang S."/>
            <person name="Shim W.-B."/>
            <person name="Woloshuk C."/>
            <person name="Xie X."/>
            <person name="Xu J.-R."/>
            <person name="Antoniw J."/>
            <person name="Baker S.E."/>
            <person name="Bluhm B.H."/>
            <person name="Breakspear A."/>
            <person name="Brown D.W."/>
            <person name="Butchko R.A.E."/>
            <person name="Chapman S."/>
            <person name="Coulson R."/>
            <person name="Coutinho P.M."/>
            <person name="Danchin E.G.J."/>
            <person name="Diener A."/>
            <person name="Gale L.R."/>
            <person name="Gardiner D.M."/>
            <person name="Goff S."/>
            <person name="Hammond-Kosack K.E."/>
            <person name="Hilburn K."/>
            <person name="Hua-Van A."/>
            <person name="Jonkers W."/>
            <person name="Kazan K."/>
            <person name="Kodira C.D."/>
            <person name="Koehrsen M."/>
            <person name="Kumar L."/>
            <person name="Lee Y.-H."/>
            <person name="Li L."/>
            <person name="Manners J.M."/>
            <person name="Miranda-Saavedra D."/>
            <person name="Mukherjee M."/>
            <person name="Park G."/>
            <person name="Park J."/>
            <person name="Park S.-Y."/>
            <person name="Proctor R.H."/>
            <person name="Regev A."/>
            <person name="Ruiz-Roldan M.C."/>
            <person name="Sain D."/>
            <person name="Sakthikumar S."/>
            <person name="Sykes S."/>
            <person name="Schwartz D.C."/>
            <person name="Turgeon B.G."/>
            <person name="Wapinski I."/>
            <person name="Yoder O."/>
            <person name="Young S."/>
            <person name="Zeng Q."/>
            <person name="Zhou S."/>
            <person name="Galagan J."/>
            <person name="Cuomo C.A."/>
            <person name="Kistler H.C."/>
            <person name="Rep M."/>
        </authorList>
    </citation>
    <scope>NUCLEOTIDE SEQUENCE [LARGE SCALE GENOMIC DNA]</scope>
    <source>
        <strain>4287 / CBS 123668 / FGSC 9935 / NRRL 34936</strain>
    </source>
</reference>
<reference key="2">
    <citation type="journal article" date="2009" name="PLoS Pathog.">
        <title>The nuclear protein Sge1 of Fusarium oxysporum is required for parasitic growth.</title>
        <authorList>
            <person name="Michielse C.B."/>
            <person name="van Wijk R."/>
            <person name="Reijnen L."/>
            <person name="Manders E.M."/>
            <person name="Boas S."/>
            <person name="Olivain C."/>
            <person name="Alabouvette C."/>
            <person name="Rep M."/>
        </authorList>
    </citation>
    <scope>FUNCTION</scope>
    <scope>INDUCTION</scope>
    <scope>SUBCELLULAR LOCATION</scope>
</reference>
<protein>
    <recommendedName>
        <fullName evidence="4">Global transcription regulator sge1</fullName>
    </recommendedName>
    <alternativeName>
        <fullName evidence="3">Six gene expression protein 1</fullName>
    </alternativeName>
</protein>
<comment type="function">
    <text evidence="2">Global transcriptional regulator of pathogenicity. Acts as an activator of parasitic growth. Not essential for colonization or penetration of the root surface, but required for expression of genes encoding effectors that are secreted during infection. Involved in conidiogenesis, but is not required for conidial fitness, overall (colony) morphology, vegetative growth or carbon source utilization.</text>
</comment>
<comment type="subcellular location">
    <subcellularLocation>
        <location evidence="2">Nucleus</location>
    </subcellularLocation>
</comment>
<comment type="induction">
    <text evidence="2">Expression is up-regulated during infection of tomato roots.</text>
</comment>
<comment type="similarity">
    <text evidence="4">Belongs to the MIT1/WOR1 family.</text>
</comment>
<evidence type="ECO:0000256" key="1">
    <source>
        <dbReference type="SAM" id="MobiDB-lite"/>
    </source>
</evidence>
<evidence type="ECO:0000269" key="2">
    <source>
    </source>
</evidence>
<evidence type="ECO:0000303" key="3">
    <source>
    </source>
</evidence>
<evidence type="ECO:0000305" key="4"/>
<feature type="chain" id="PRO_0000431524" description="Global transcription regulator sge1">
    <location>
        <begin position="1"/>
        <end position="330"/>
    </location>
</feature>
<feature type="region of interest" description="Disordered" evidence="1">
    <location>
        <begin position="93"/>
        <end position="123"/>
    </location>
</feature>
<feature type="region of interest" description="Disordered" evidence="1">
    <location>
        <begin position="239"/>
        <end position="306"/>
    </location>
</feature>
<feature type="compositionally biased region" description="Polar residues" evidence="1">
    <location>
        <begin position="105"/>
        <end position="114"/>
    </location>
</feature>
<feature type="compositionally biased region" description="Low complexity" evidence="1">
    <location>
        <begin position="250"/>
        <end position="306"/>
    </location>
</feature>
<proteinExistence type="evidence at transcript level"/>
<gene>
    <name evidence="3" type="primary">sge1</name>
    <name type="ORF">FOXG_10510</name>
</gene>
<name>WOR1_FUSO4</name>
<keyword id="KW-0010">Activator</keyword>
<keyword id="KW-0539">Nucleus</keyword>
<keyword id="KW-0804">Transcription</keyword>
<keyword id="KW-0805">Transcription regulation</keyword>
<keyword id="KW-0843">Virulence</keyword>